<protein>
    <recommendedName>
        <fullName evidence="2">Formamidopyrimidine-DNA glycosylase</fullName>
        <shortName evidence="2">Fapy-DNA glycosylase</shortName>
        <ecNumber evidence="2">3.2.2.23</ecNumber>
    </recommendedName>
    <alternativeName>
        <fullName evidence="2">DNA-(apurinic or apyrimidinic site) lyase MutM</fullName>
        <shortName evidence="2">AP lyase MutM</shortName>
        <ecNumber evidence="2">4.2.99.18</ecNumber>
    </alternativeName>
</protein>
<keyword id="KW-0227">DNA damage</keyword>
<keyword id="KW-0234">DNA repair</keyword>
<keyword id="KW-0238">DNA-binding</keyword>
<keyword id="KW-0326">Glycosidase</keyword>
<keyword id="KW-0378">Hydrolase</keyword>
<keyword id="KW-0456">Lyase</keyword>
<keyword id="KW-0479">Metal-binding</keyword>
<keyword id="KW-0511">Multifunctional enzyme</keyword>
<keyword id="KW-1185">Reference proteome</keyword>
<keyword id="KW-0862">Zinc</keyword>
<keyword id="KW-0863">Zinc-finger</keyword>
<dbReference type="EC" id="3.2.2.23" evidence="2"/>
<dbReference type="EC" id="4.2.99.18" evidence="2"/>
<dbReference type="EMBL" id="CP000238">
    <property type="protein sequence ID" value="ABF13871.1"/>
    <property type="molecule type" value="Genomic_DNA"/>
</dbReference>
<dbReference type="RefSeq" id="WP_011520371.1">
    <property type="nucleotide sequence ID" value="NC_007984.1"/>
</dbReference>
<dbReference type="SMR" id="Q1LTS6"/>
<dbReference type="STRING" id="374463.BCI_0177"/>
<dbReference type="KEGG" id="bci:BCI_0177"/>
<dbReference type="HOGENOM" id="CLU_038423_1_1_6"/>
<dbReference type="OrthoDB" id="9800855at2"/>
<dbReference type="Proteomes" id="UP000002427">
    <property type="component" value="Chromosome"/>
</dbReference>
<dbReference type="GO" id="GO:0034039">
    <property type="term" value="F:8-oxo-7,8-dihydroguanine DNA N-glycosylase activity"/>
    <property type="evidence" value="ECO:0007669"/>
    <property type="project" value="TreeGrafter"/>
</dbReference>
<dbReference type="GO" id="GO:0140078">
    <property type="term" value="F:class I DNA-(apurinic or apyrimidinic site) endonuclease activity"/>
    <property type="evidence" value="ECO:0007669"/>
    <property type="project" value="UniProtKB-EC"/>
</dbReference>
<dbReference type="GO" id="GO:0003684">
    <property type="term" value="F:damaged DNA binding"/>
    <property type="evidence" value="ECO:0007669"/>
    <property type="project" value="InterPro"/>
</dbReference>
<dbReference type="GO" id="GO:0008270">
    <property type="term" value="F:zinc ion binding"/>
    <property type="evidence" value="ECO:0007669"/>
    <property type="project" value="UniProtKB-UniRule"/>
</dbReference>
<dbReference type="GO" id="GO:0006284">
    <property type="term" value="P:base-excision repair"/>
    <property type="evidence" value="ECO:0007669"/>
    <property type="project" value="InterPro"/>
</dbReference>
<dbReference type="CDD" id="cd08966">
    <property type="entry name" value="EcFpg-like_N"/>
    <property type="match status" value="1"/>
</dbReference>
<dbReference type="FunFam" id="1.10.8.50:FF:000003">
    <property type="entry name" value="Formamidopyrimidine-DNA glycosylase"/>
    <property type="match status" value="1"/>
</dbReference>
<dbReference type="FunFam" id="3.20.190.10:FF:000001">
    <property type="entry name" value="Formamidopyrimidine-DNA glycosylase"/>
    <property type="match status" value="1"/>
</dbReference>
<dbReference type="Gene3D" id="1.10.8.50">
    <property type="match status" value="1"/>
</dbReference>
<dbReference type="Gene3D" id="3.20.190.10">
    <property type="entry name" value="MutM-like, N-terminal"/>
    <property type="match status" value="1"/>
</dbReference>
<dbReference type="HAMAP" id="MF_00103">
    <property type="entry name" value="Fapy_DNA_glycosyl"/>
    <property type="match status" value="1"/>
</dbReference>
<dbReference type="InterPro" id="IPR015886">
    <property type="entry name" value="DNA_glyclase/AP_lyase_DNA-bd"/>
</dbReference>
<dbReference type="InterPro" id="IPR015887">
    <property type="entry name" value="DNA_glyclase_Znf_dom_DNA_BS"/>
</dbReference>
<dbReference type="InterPro" id="IPR020629">
    <property type="entry name" value="Formamido-pyr_DNA_Glyclase"/>
</dbReference>
<dbReference type="InterPro" id="IPR012319">
    <property type="entry name" value="FPG_cat"/>
</dbReference>
<dbReference type="InterPro" id="IPR035937">
    <property type="entry name" value="MutM-like_N-ter"/>
</dbReference>
<dbReference type="InterPro" id="IPR010979">
    <property type="entry name" value="Ribosomal_uS13-like_H2TH"/>
</dbReference>
<dbReference type="InterPro" id="IPR000214">
    <property type="entry name" value="Znf_DNA_glyclase/AP_lyase"/>
</dbReference>
<dbReference type="NCBIfam" id="TIGR00577">
    <property type="entry name" value="fpg"/>
    <property type="match status" value="1"/>
</dbReference>
<dbReference type="NCBIfam" id="NF002211">
    <property type="entry name" value="PRK01103.1"/>
    <property type="match status" value="1"/>
</dbReference>
<dbReference type="PANTHER" id="PTHR22993">
    <property type="entry name" value="FORMAMIDOPYRIMIDINE-DNA GLYCOSYLASE"/>
    <property type="match status" value="1"/>
</dbReference>
<dbReference type="PANTHER" id="PTHR22993:SF9">
    <property type="entry name" value="FORMAMIDOPYRIMIDINE-DNA GLYCOSYLASE"/>
    <property type="match status" value="1"/>
</dbReference>
<dbReference type="Pfam" id="PF01149">
    <property type="entry name" value="Fapy_DNA_glyco"/>
    <property type="match status" value="1"/>
</dbReference>
<dbReference type="Pfam" id="PF06831">
    <property type="entry name" value="H2TH"/>
    <property type="match status" value="1"/>
</dbReference>
<dbReference type="SMART" id="SM00898">
    <property type="entry name" value="Fapy_DNA_glyco"/>
    <property type="match status" value="1"/>
</dbReference>
<dbReference type="SMART" id="SM01232">
    <property type="entry name" value="H2TH"/>
    <property type="match status" value="1"/>
</dbReference>
<dbReference type="SUPFAM" id="SSF57716">
    <property type="entry name" value="Glucocorticoid receptor-like (DNA-binding domain)"/>
    <property type="match status" value="1"/>
</dbReference>
<dbReference type="SUPFAM" id="SSF81624">
    <property type="entry name" value="N-terminal domain of MutM-like DNA repair proteins"/>
    <property type="match status" value="1"/>
</dbReference>
<dbReference type="SUPFAM" id="SSF46946">
    <property type="entry name" value="S13-like H2TH domain"/>
    <property type="match status" value="1"/>
</dbReference>
<dbReference type="PROSITE" id="PS51068">
    <property type="entry name" value="FPG_CAT"/>
    <property type="match status" value="1"/>
</dbReference>
<dbReference type="PROSITE" id="PS01242">
    <property type="entry name" value="ZF_FPG_1"/>
    <property type="match status" value="1"/>
</dbReference>
<dbReference type="PROSITE" id="PS51066">
    <property type="entry name" value="ZF_FPG_2"/>
    <property type="match status" value="1"/>
</dbReference>
<comment type="function">
    <text evidence="2">Involved in base excision repair of DNA damaged by oxidation or by mutagenic agents. Acts as a DNA glycosylase that recognizes and removes damaged bases. Has a preference for oxidized purines, such as 7,8-dihydro-8-oxoguanine (8-oxoG). Has AP (apurinic/apyrimidinic) lyase activity and introduces nicks in the DNA strand. Cleaves the DNA backbone by beta-delta elimination to generate a single-strand break at the site of the removed base with both 3'- and 5'-phosphates.</text>
</comment>
<comment type="catalytic activity">
    <reaction evidence="2">
        <text>Hydrolysis of DNA containing ring-opened 7-methylguanine residues, releasing 2,6-diamino-4-hydroxy-5-(N-methyl)formamidopyrimidine.</text>
        <dbReference type="EC" id="3.2.2.23"/>
    </reaction>
</comment>
<comment type="catalytic activity">
    <reaction evidence="2">
        <text>2'-deoxyribonucleotide-(2'-deoxyribose 5'-phosphate)-2'-deoxyribonucleotide-DNA = a 3'-end 2'-deoxyribonucleotide-(2,3-dehydro-2,3-deoxyribose 5'-phosphate)-DNA + a 5'-end 5'-phospho-2'-deoxyribonucleoside-DNA + H(+)</text>
        <dbReference type="Rhea" id="RHEA:66592"/>
        <dbReference type="Rhea" id="RHEA-COMP:13180"/>
        <dbReference type="Rhea" id="RHEA-COMP:16897"/>
        <dbReference type="Rhea" id="RHEA-COMP:17067"/>
        <dbReference type="ChEBI" id="CHEBI:15378"/>
        <dbReference type="ChEBI" id="CHEBI:136412"/>
        <dbReference type="ChEBI" id="CHEBI:157695"/>
        <dbReference type="ChEBI" id="CHEBI:167181"/>
        <dbReference type="EC" id="4.2.99.18"/>
    </reaction>
</comment>
<comment type="cofactor">
    <cofactor evidence="2">
        <name>Zn(2+)</name>
        <dbReference type="ChEBI" id="CHEBI:29105"/>
    </cofactor>
    <text evidence="2">Binds 1 zinc ion per subunit.</text>
</comment>
<comment type="subunit">
    <text evidence="2">Monomer.</text>
</comment>
<comment type="similarity">
    <text evidence="2">Belongs to the FPG family.</text>
</comment>
<feature type="initiator methionine" description="Removed" evidence="1">
    <location>
        <position position="1"/>
    </location>
</feature>
<feature type="chain" id="PRO_1000008676" description="Formamidopyrimidine-DNA glycosylase">
    <location>
        <begin position="2"/>
        <end position="269"/>
    </location>
</feature>
<feature type="zinc finger region" description="FPG-type" evidence="2">
    <location>
        <begin position="235"/>
        <end position="269"/>
    </location>
</feature>
<feature type="active site" description="Schiff-base intermediate with DNA" evidence="2">
    <location>
        <position position="2"/>
    </location>
</feature>
<feature type="active site" description="Proton donor" evidence="2">
    <location>
        <position position="3"/>
    </location>
</feature>
<feature type="active site" description="Proton donor; for beta-elimination activity" evidence="2">
    <location>
        <position position="57"/>
    </location>
</feature>
<feature type="active site" description="Proton donor; for delta-elimination activity" evidence="2">
    <location>
        <position position="259"/>
    </location>
</feature>
<feature type="binding site" evidence="2">
    <location>
        <position position="90"/>
    </location>
    <ligand>
        <name>DNA</name>
        <dbReference type="ChEBI" id="CHEBI:16991"/>
    </ligand>
</feature>
<feature type="binding site" evidence="2">
    <location>
        <position position="109"/>
    </location>
    <ligand>
        <name>DNA</name>
        <dbReference type="ChEBI" id="CHEBI:16991"/>
    </ligand>
</feature>
<feature type="binding site" evidence="2">
    <location>
        <position position="150"/>
    </location>
    <ligand>
        <name>DNA</name>
        <dbReference type="ChEBI" id="CHEBI:16991"/>
    </ligand>
</feature>
<name>FPG_BAUCH</name>
<organism>
    <name type="scientific">Baumannia cicadellinicola subsp. Homalodisca coagulata</name>
    <dbReference type="NCBI Taxonomy" id="374463"/>
    <lineage>
        <taxon>Bacteria</taxon>
        <taxon>Pseudomonadati</taxon>
        <taxon>Pseudomonadota</taxon>
        <taxon>Gammaproteobacteria</taxon>
        <taxon>Candidatus Palibaumannia</taxon>
    </lineage>
</organism>
<proteinExistence type="inferred from homology"/>
<gene>
    <name evidence="2" type="primary">mutM</name>
    <name evidence="2" type="synonym">fpg</name>
    <name type="ordered locus">BCI_0177</name>
</gene>
<reference key="1">
    <citation type="journal article" date="2006" name="PLoS Biol.">
        <title>Metabolic complementarity and genomics of the dual bacterial symbiosis of sharpshooters.</title>
        <authorList>
            <person name="Wu D."/>
            <person name="Daugherty S.C."/>
            <person name="Van Aken S.E."/>
            <person name="Pai G.H."/>
            <person name="Watkins K.L."/>
            <person name="Khouri H."/>
            <person name="Tallon L.J."/>
            <person name="Zaborsky J.M."/>
            <person name="Dunbar H.E."/>
            <person name="Tran P.L."/>
            <person name="Moran N.A."/>
            <person name="Eisen J.A."/>
        </authorList>
    </citation>
    <scope>NUCLEOTIDE SEQUENCE [LARGE SCALE GENOMIC DNA]</scope>
</reference>
<evidence type="ECO:0000250" key="1"/>
<evidence type="ECO:0000255" key="2">
    <source>
        <dbReference type="HAMAP-Rule" id="MF_00103"/>
    </source>
</evidence>
<accession>Q1LTS6</accession>
<sequence length="269" mass="30929">MPELPEVEIIRRGIEPWVVGHIIQRAEIRNNQLRWPIDQEIISIHQRRVISLKRRAKYLLMQLHHGWIIIHFGMSGRLRILAHMLPPEKHDHIDLIMSNNCILRYTDPRRFGAWLWSNNLDKMSILNNLGVEPLSDQFDGHWLFTKSRNKSLLIKQFLMTNKLVVGIGNIYANEALFAAGILPSRASCSLKEQEALLLARSIKAILLSSIEEGGTTLRDFLQSDGRDGLFAKKLQVYGRHGEPCYTCGEFIQIAKYGQRSSFFCPSCQN</sequence>